<gene>
    <name evidence="1" type="primary">SH3GL2</name>
    <name evidence="9" type="synonym">SH3P4</name>
</gene>
<dbReference type="EMBL" id="AJ439350">
    <property type="protein sequence ID" value="CAD27935.1"/>
    <property type="molecule type" value="mRNA"/>
</dbReference>
<dbReference type="RefSeq" id="NP_989861.1">
    <property type="nucleotide sequence ID" value="NM_204530.2"/>
</dbReference>
<dbReference type="SMR" id="Q8AXV1"/>
<dbReference type="BioGRID" id="675497">
    <property type="interactions" value="4"/>
</dbReference>
<dbReference type="FunCoup" id="Q8AXV1">
    <property type="interactions" value="298"/>
</dbReference>
<dbReference type="STRING" id="9031.ENSGALP00000024312"/>
<dbReference type="PaxDb" id="9031-ENSGALP00000024312"/>
<dbReference type="GeneID" id="395203"/>
<dbReference type="KEGG" id="gga:395203"/>
<dbReference type="CTD" id="6456"/>
<dbReference type="VEuPathDB" id="HostDB:geneid_395203"/>
<dbReference type="eggNOG" id="KOG1118">
    <property type="taxonomic scope" value="Eukaryota"/>
</dbReference>
<dbReference type="HOGENOM" id="CLU_047887_0_0_1"/>
<dbReference type="InParanoid" id="Q8AXV1"/>
<dbReference type="OMA" id="IQPRREY"/>
<dbReference type="OrthoDB" id="443981at2759"/>
<dbReference type="PhylomeDB" id="Q8AXV1"/>
<dbReference type="Reactome" id="R-GGA-177504">
    <property type="pathway name" value="Retrograde neurotrophin signalling"/>
</dbReference>
<dbReference type="Reactome" id="R-GGA-182971">
    <property type="pathway name" value="EGFR downregulation"/>
</dbReference>
<dbReference type="Reactome" id="R-GGA-2132295">
    <property type="pathway name" value="MHC class II antigen presentation"/>
</dbReference>
<dbReference type="Reactome" id="R-GGA-432720">
    <property type="pathway name" value="Lysosome Vesicle Biogenesis"/>
</dbReference>
<dbReference type="Reactome" id="R-GGA-432722">
    <property type="pathway name" value="Golgi Associated Vesicle Biogenesis"/>
</dbReference>
<dbReference type="Reactome" id="R-GGA-437239">
    <property type="pathway name" value="Recycling pathway of L1"/>
</dbReference>
<dbReference type="Reactome" id="R-GGA-6807004">
    <property type="pathway name" value="Negative regulation of MET activity"/>
</dbReference>
<dbReference type="Reactome" id="R-GGA-8856825">
    <property type="pathway name" value="Cargo recognition for clathrin-mediated endocytosis"/>
</dbReference>
<dbReference type="Reactome" id="R-GGA-8856828">
    <property type="pathway name" value="Clathrin-mediated endocytosis"/>
</dbReference>
<dbReference type="PRO" id="PR:Q8AXV1"/>
<dbReference type="Proteomes" id="UP000000539">
    <property type="component" value="Chromosome Z"/>
</dbReference>
<dbReference type="Bgee" id="ENSGALG00000015096">
    <property type="expression patterns" value="Expressed in cerebellum and 2 other cell types or tissues"/>
</dbReference>
<dbReference type="GO" id="GO:0042995">
    <property type="term" value="C:cell projection"/>
    <property type="evidence" value="ECO:0007669"/>
    <property type="project" value="UniProtKB-KW"/>
</dbReference>
<dbReference type="GO" id="GO:0005737">
    <property type="term" value="C:cytoplasm"/>
    <property type="evidence" value="ECO:0000318"/>
    <property type="project" value="GO_Central"/>
</dbReference>
<dbReference type="GO" id="GO:0005769">
    <property type="term" value="C:early endosome"/>
    <property type="evidence" value="ECO:0007669"/>
    <property type="project" value="UniProtKB-SubCell"/>
</dbReference>
<dbReference type="GO" id="GO:0098978">
    <property type="term" value="C:glutamatergic synapse"/>
    <property type="evidence" value="ECO:0000318"/>
    <property type="project" value="GO_Central"/>
</dbReference>
<dbReference type="GO" id="GO:0016020">
    <property type="term" value="C:membrane"/>
    <property type="evidence" value="ECO:0007669"/>
    <property type="project" value="UniProtKB-SubCell"/>
</dbReference>
<dbReference type="GO" id="GO:0098793">
    <property type="term" value="C:presynapse"/>
    <property type="evidence" value="ECO:0000318"/>
    <property type="project" value="GO_Central"/>
</dbReference>
<dbReference type="GO" id="GO:0008289">
    <property type="term" value="F:lipid binding"/>
    <property type="evidence" value="ECO:0007669"/>
    <property type="project" value="UniProtKB-KW"/>
</dbReference>
<dbReference type="GO" id="GO:0006897">
    <property type="term" value="P:endocytosis"/>
    <property type="evidence" value="ECO:0007669"/>
    <property type="project" value="UniProtKB-KW"/>
</dbReference>
<dbReference type="CDD" id="cd07613">
    <property type="entry name" value="BAR_Endophilin_A1"/>
    <property type="match status" value="1"/>
</dbReference>
<dbReference type="CDD" id="cd11803">
    <property type="entry name" value="SH3_Endophilin_A"/>
    <property type="match status" value="1"/>
</dbReference>
<dbReference type="FunFam" id="2.30.30.40:FF:000053">
    <property type="entry name" value="endophilin-A1 isoform X2"/>
    <property type="match status" value="1"/>
</dbReference>
<dbReference type="FunFam" id="1.20.1270.60:FF:000021">
    <property type="entry name" value="Endophilin-A2 isoform 1"/>
    <property type="match status" value="1"/>
</dbReference>
<dbReference type="Gene3D" id="1.20.1270.60">
    <property type="entry name" value="Arfaptin homology (AH) domain/BAR domain"/>
    <property type="match status" value="1"/>
</dbReference>
<dbReference type="Gene3D" id="2.30.30.40">
    <property type="entry name" value="SH3 Domains"/>
    <property type="match status" value="1"/>
</dbReference>
<dbReference type="InterPro" id="IPR027267">
    <property type="entry name" value="AH/BAR_dom_sf"/>
</dbReference>
<dbReference type="InterPro" id="IPR004148">
    <property type="entry name" value="BAR_dom"/>
</dbReference>
<dbReference type="InterPro" id="IPR035824">
    <property type="entry name" value="Endophilin_A_SH3"/>
</dbReference>
<dbReference type="InterPro" id="IPR050384">
    <property type="entry name" value="Endophilin_SH3RF"/>
</dbReference>
<dbReference type="InterPro" id="IPR036028">
    <property type="entry name" value="SH3-like_dom_sf"/>
</dbReference>
<dbReference type="InterPro" id="IPR001452">
    <property type="entry name" value="SH3_domain"/>
</dbReference>
<dbReference type="PANTHER" id="PTHR14167:SF50">
    <property type="entry name" value="ENDOPHILIN-A1"/>
    <property type="match status" value="1"/>
</dbReference>
<dbReference type="PANTHER" id="PTHR14167">
    <property type="entry name" value="SH3 DOMAIN-CONTAINING"/>
    <property type="match status" value="1"/>
</dbReference>
<dbReference type="Pfam" id="PF03114">
    <property type="entry name" value="BAR"/>
    <property type="match status" value="1"/>
</dbReference>
<dbReference type="Pfam" id="PF00018">
    <property type="entry name" value="SH3_1"/>
    <property type="match status" value="1"/>
</dbReference>
<dbReference type="PRINTS" id="PR00452">
    <property type="entry name" value="SH3DOMAIN"/>
</dbReference>
<dbReference type="SMART" id="SM00721">
    <property type="entry name" value="BAR"/>
    <property type="match status" value="1"/>
</dbReference>
<dbReference type="SMART" id="SM00326">
    <property type="entry name" value="SH3"/>
    <property type="match status" value="1"/>
</dbReference>
<dbReference type="SUPFAM" id="SSF103657">
    <property type="entry name" value="BAR/IMD domain-like"/>
    <property type="match status" value="1"/>
</dbReference>
<dbReference type="SUPFAM" id="SSF50044">
    <property type="entry name" value="SH3-domain"/>
    <property type="match status" value="1"/>
</dbReference>
<dbReference type="PROSITE" id="PS51021">
    <property type="entry name" value="BAR"/>
    <property type="match status" value="1"/>
</dbReference>
<dbReference type="PROSITE" id="PS50002">
    <property type="entry name" value="SH3"/>
    <property type="match status" value="1"/>
</dbReference>
<accession>Q8AXV1</accession>
<protein>
    <recommendedName>
        <fullName>Endophilin-A1</fullName>
    </recommendedName>
    <alternativeName>
        <fullName>Endophilin-1</fullName>
    </alternativeName>
    <alternativeName>
        <fullName>SH3 domain-containing GRB2-like protein 1</fullName>
    </alternativeName>
    <alternativeName>
        <fullName>SH3p4</fullName>
    </alternativeName>
</protein>
<evidence type="ECO:0000250" key="1">
    <source>
        <dbReference type="UniProtKB" id="O35179"/>
    </source>
</evidence>
<evidence type="ECO:0000250" key="2">
    <source>
        <dbReference type="UniProtKB" id="Q62420"/>
    </source>
</evidence>
<evidence type="ECO:0000255" key="3"/>
<evidence type="ECO:0000255" key="4">
    <source>
        <dbReference type="PROSITE-ProRule" id="PRU00192"/>
    </source>
</evidence>
<evidence type="ECO:0000255" key="5">
    <source>
        <dbReference type="PROSITE-ProRule" id="PRU00361"/>
    </source>
</evidence>
<evidence type="ECO:0000256" key="6">
    <source>
        <dbReference type="SAM" id="MobiDB-lite"/>
    </source>
</evidence>
<evidence type="ECO:0000269" key="7">
    <source>
    </source>
</evidence>
<evidence type="ECO:0000305" key="8"/>
<evidence type="ECO:0000312" key="9">
    <source>
        <dbReference type="EMBL" id="CAD27935.1"/>
    </source>
</evidence>
<keyword id="KW-0966">Cell projection</keyword>
<keyword id="KW-0175">Coiled coil</keyword>
<keyword id="KW-0963">Cytoplasm</keyword>
<keyword id="KW-0254">Endocytosis</keyword>
<keyword id="KW-0967">Endosome</keyword>
<keyword id="KW-0446">Lipid-binding</keyword>
<keyword id="KW-0472">Membrane</keyword>
<keyword id="KW-1185">Reference proteome</keyword>
<keyword id="KW-0728">SH3 domain</keyword>
<keyword id="KW-0770">Synapse</keyword>
<organism>
    <name type="scientific">Gallus gallus</name>
    <name type="common">Chicken</name>
    <dbReference type="NCBI Taxonomy" id="9031"/>
    <lineage>
        <taxon>Eukaryota</taxon>
        <taxon>Metazoa</taxon>
        <taxon>Chordata</taxon>
        <taxon>Craniata</taxon>
        <taxon>Vertebrata</taxon>
        <taxon>Euteleostomi</taxon>
        <taxon>Archelosauria</taxon>
        <taxon>Archosauria</taxon>
        <taxon>Dinosauria</taxon>
        <taxon>Saurischia</taxon>
        <taxon>Theropoda</taxon>
        <taxon>Coelurosauria</taxon>
        <taxon>Aves</taxon>
        <taxon>Neognathae</taxon>
        <taxon>Galloanserae</taxon>
        <taxon>Galliformes</taxon>
        <taxon>Phasianidae</taxon>
        <taxon>Phasianinae</taxon>
        <taxon>Gallus</taxon>
    </lineage>
</organism>
<sequence length="353" mass="39934">MSVAGLKKQFHKATQKVSEKVGGAEGTKLDDDFKEMERKVDVTSRAVMEIMAKTIEYLQPNPASRAKLSMINTMSKIRGQEKGPGYPQAEALLADAMLKFGRELGEECNFGPALADVGEAMKELSEVKDSLDMEVKQNFIDPLQNLHDKDLREIQHHLKKMEGRRLDFDYKKKRQGKLPDEELRQALEKFDESKEIAESSMFNLLEMDIEQVSQLSALVQAQLEYHKQATQILQRVTSKLEDRIKEASSQPKREYQPKPRMSLDFTSGGDNTQHNGGISHATTPKPAGAHMDQPCCRALYDFEPENEGELGFKEGDIITLTNQIDENWYEGMLHGQSGFFPINYVDILVPLPN</sequence>
<name>SH3G2_CHICK</name>
<reference evidence="8 9" key="1">
    <citation type="journal article" date="2003" name="Biol. Reprod.">
        <title>Receptor-mediated chicken oocyte growth: differential expression of endophilin isoforms in developing follicles.</title>
        <authorList>
            <person name="Hirayama S."/>
            <person name="Bajari T.M."/>
            <person name="Nimpf J."/>
            <person name="Schneider W.J."/>
        </authorList>
    </citation>
    <scope>NUCLEOTIDE SEQUENCE [MRNA]</scope>
    <scope>TISSUE SPECIFICITY</scope>
    <scope>INTERACTION WITH SYNJ1 AND DNM1</scope>
    <source>
        <tissue evidence="9">Brain</tissue>
    </source>
</reference>
<comment type="function">
    <text evidence="1">Implicated in synaptic vesicle endocytosis. May recruit other proteins to membranes with high curvature (By similarity).</text>
</comment>
<comment type="subunit">
    <text evidence="1 7">Monomer; in cytoplasm. Homodimer; when associated with membranes. Associates with MAP4K3. This interaction appears to regulate MAP4K3-mediated JNK activation (By similarity). Interacts with SYNJ1 and DNM1.</text>
</comment>
<comment type="subcellular location">
    <subcellularLocation>
        <location evidence="1">Cytoplasm</location>
    </subcellularLocation>
    <subcellularLocation>
        <location evidence="1">Membrane</location>
        <topology evidence="1">Peripheral membrane protein</topology>
    </subcellularLocation>
    <subcellularLocation>
        <location evidence="2">Early endosome</location>
    </subcellularLocation>
    <subcellularLocation>
        <location evidence="1">Presynapse</location>
    </subcellularLocation>
</comment>
<comment type="tissue specificity">
    <text evidence="7">Highly expressed in brain.</text>
</comment>
<comment type="domain">
    <text evidence="1">An N-terminal amphipathic helix, the BAR domain and a second amphipathic helix inserted into helix 1 of the BAR domain (N-BAR domain) induce membrane curvature and bind curved membranes. The BAR domain dimer forms a rigid crescent shaped bundle of helices with the pair of second amphipathic helices protruding towards the membrane-binding surface (By similarity).</text>
</comment>
<comment type="similarity">
    <text evidence="3">Belongs to the endophilin family.</text>
</comment>
<proteinExistence type="evidence at protein level"/>
<feature type="chain" id="PRO_0000309487" description="Endophilin-A1">
    <location>
        <begin position="1"/>
        <end position="353"/>
    </location>
</feature>
<feature type="domain" description="BAR" evidence="5">
    <location>
        <begin position="18"/>
        <end position="249"/>
    </location>
</feature>
<feature type="domain" description="SH3" evidence="4">
    <location>
        <begin position="291"/>
        <end position="350"/>
    </location>
</feature>
<feature type="region of interest" description="Binds and tubulates liposomes" evidence="1">
    <location>
        <begin position="1"/>
        <end position="125"/>
    </location>
</feature>
<feature type="region of interest" description="Disordered" evidence="6">
    <location>
        <begin position="1"/>
        <end position="27"/>
    </location>
</feature>
<feature type="region of interest" description="Membrane-binding amphipathic helix" evidence="1">
    <location>
        <begin position="1"/>
        <end position="21"/>
    </location>
</feature>
<feature type="region of interest" description="Required for dimerization upon membrane association" evidence="1">
    <location>
        <begin position="60"/>
        <end position="87"/>
    </location>
</feature>
<feature type="region of interest" description="Disordered" evidence="6">
    <location>
        <begin position="243"/>
        <end position="290"/>
    </location>
</feature>
<feature type="coiled-coil region" evidence="3">
    <location>
        <begin position="181"/>
        <end position="201"/>
    </location>
</feature>
<feature type="compositionally biased region" description="Basic and acidic residues" evidence="6">
    <location>
        <begin position="243"/>
        <end position="257"/>
    </location>
</feature>
<feature type="compositionally biased region" description="Polar residues" evidence="6">
    <location>
        <begin position="264"/>
        <end position="282"/>
    </location>
</feature>